<proteinExistence type="evidence at protein level"/>
<gene>
    <name type="primary">NUP145</name>
    <name type="ORF">CTHT_0042590</name>
</gene>
<evidence type="ECO:0000250" key="1">
    <source>
        <dbReference type="UniProtKB" id="P49687"/>
    </source>
</evidence>
<evidence type="ECO:0000255" key="2">
    <source>
        <dbReference type="PROSITE-ProRule" id="PRU00765"/>
    </source>
</evidence>
<evidence type="ECO:0000256" key="3">
    <source>
        <dbReference type="SAM" id="MobiDB-lite"/>
    </source>
</evidence>
<evidence type="ECO:0000303" key="4">
    <source>
    </source>
</evidence>
<evidence type="ECO:0000305" key="5"/>
<evidence type="ECO:0000305" key="6">
    <source>
    </source>
</evidence>
<evidence type="ECO:0007829" key="7">
    <source>
        <dbReference type="PDB" id="5HB6"/>
    </source>
</evidence>
<comment type="function">
    <text evidence="1">Functions as a component of the nuclear pore complex (NPC). NPC components, collectively referred to as nucleoporins (NUPs), can play the role of both NPC structural components and of docking or interaction partners for transiently associated nuclear transport factors. Active directional transport is assured by both, a Phe-Gly (FG) repeat affinity gradient for these transport factors across the NPC and a transport cofactor concentration gradient across the nuclear envelope. NUP145 is autocatalytically cleaved in vivo in 2 polypeptides which assume different functions in the NPC. NUP145N as one of the FG repeat nucleoporins participates in karyopherin interactions and contains part of the autocatalytic cleavage activity. NUP145C as part of the NUP84 complex is involved in nuclear poly(A)+ RNA and tRNA export.</text>
</comment>
<comment type="subunit">
    <text evidence="1 6">Component of the nuclear pore complex (NPC). NPC constitutes the exclusive means of nucleocytoplasmic transport. NPCs allow the passive diffusion of ions and small molecules and the active, nuclear transport receptor-mediated bidirectional transport of macromolecules such as proteins, RNAs, ribonucleoparticles (RNPs), and ribosomal subunits across the nuclear envelope. Due to its 8-fold rotational symmetry, all subunits are present with 8 copies or multiples thereof.</text>
</comment>
<comment type="interaction">
    <interactant intactId="EBI-16069276">
        <id>G0SAK3</id>
    </interactant>
    <interactant intactId="EBI-16069391">
        <id>G0S2G1</id>
        <label>ELYS</label>
    </interactant>
    <organismsDiffer>false</organismsDiffer>
    <experiments>5</experiments>
</comment>
<comment type="interaction">
    <interactant intactId="EBI-16069276">
        <id>G0SAK3</id>
    </interactant>
    <interactant intactId="EBI-16069242">
        <id>G0S0E7</id>
        <label>NUP120</label>
    </interactant>
    <organismsDiffer>false</organismsDiffer>
    <experiments>12</experiments>
</comment>
<comment type="interaction">
    <interactant intactId="EBI-16069276">
        <id>G0SAK3</id>
    </interactant>
    <interactant intactId="EBI-4325187">
        <id>G0S4T0</id>
        <label>NUP192</label>
    </interactant>
    <organismsDiffer>false</organismsDiffer>
    <experiments>3</experiments>
</comment>
<comment type="interaction">
    <interactant intactId="EBI-16069276">
        <id>G0SAK3</id>
    </interactant>
    <interactant intactId="EBI-16176422">
        <id>G0S4F3</id>
        <label>NUP82</label>
    </interactant>
    <organismsDiffer>false</organismsDiffer>
    <experiments>2</experiments>
</comment>
<comment type="interaction">
    <interactant intactId="EBI-16069276">
        <id>G0SAK3</id>
    </interactant>
    <interactant intactId="EBI-16069259">
        <id>G0SDQ4</id>
        <label>NUP85</label>
    </interactant>
    <organismsDiffer>false</organismsDiffer>
    <experiments>7</experiments>
</comment>
<comment type="subcellular location">
    <molecule>Nucleoporin NUP145C</molecule>
    <subcellularLocation>
        <location evidence="1">Nucleus</location>
        <location evidence="1">Nuclear pore complex</location>
    </subcellularLocation>
    <subcellularLocation>
        <location evidence="1">Nucleus membrane</location>
        <topology evidence="1">Peripheral membrane protein</topology>
        <orientation evidence="1">Cytoplasmic side</orientation>
    </subcellularLocation>
    <subcellularLocation>
        <location evidence="1">Nucleus membrane</location>
        <topology evidence="1">Peripheral membrane protein</topology>
        <orientation evidence="1">Nucleoplasmic side</orientation>
    </subcellularLocation>
    <text evidence="1">Symmetrically distributed on the cytoplasmic and nucleoplasmic side of nuclear envelope.</text>
</comment>
<comment type="subcellular location">
    <molecule>Nucleoporin NUP145N</molecule>
    <subcellularLocation>
        <location evidence="1">Nucleus</location>
        <location evidence="1">Nuclear pore complex</location>
    </subcellularLocation>
    <subcellularLocation>
        <location evidence="1">Nucleus membrane</location>
        <topology evidence="1">Peripheral membrane protein</topology>
        <orientation evidence="1">Nucleoplasmic side</orientation>
    </subcellularLocation>
    <text evidence="1">Biased towards the nucleoplasmic side, nuclear pore complex.</text>
</comment>
<comment type="domain">
    <text evidence="1">Contains FG repeats. FG repeats are interaction sites for karyopherins (importins, exportins) and form probably an affinity gradient, guiding the transport proteins unidirectionally with their cargo through the NPC. FG repeat regions are highly flexible and lack ordered secondary structure. The overall conservation of FG repeats regarding exact sequence, spacing, and repeat unit length is limited. FG repeat types and their physico-chemical environment change across the NPC from the nucleoplasmic to the cytoplasmic side: GLFG repeats are especially abundant in NUPs in the central region (lacking a charged environment but are enriched in Ser, Thr, Gln, and Asn).</text>
</comment>
<comment type="PTM">
    <text evidence="1">NUP145 is autocatalytically cleaved in NUP145N and NUP145C.</text>
</comment>
<comment type="similarity">
    <text evidence="5">Belongs to the nucleoporin GLFG family.</text>
</comment>
<protein>
    <recommendedName>
        <fullName>Nucleoporin NUP145</fullName>
        <ecNumber>3.4.21.-</ecNumber>
    </recommendedName>
    <alternativeName>
        <fullName>Nuclear pore protein NUP145</fullName>
    </alternativeName>
    <component>
        <recommendedName>
            <fullName evidence="4">Nucleoporin NUP145N</fullName>
            <shortName>N-NUP145</shortName>
        </recommendedName>
    </component>
    <component>
        <recommendedName>
            <fullName evidence="4">Nucleoporin NUP145C</fullName>
            <shortName>C-NUP145</shortName>
        </recommendedName>
    </component>
</protein>
<dbReference type="EC" id="3.4.21.-"/>
<dbReference type="EMBL" id="GL988043">
    <property type="protein sequence ID" value="EGS19775.1"/>
    <property type="molecule type" value="Genomic_DNA"/>
</dbReference>
<dbReference type="EMBL" id="JF276292">
    <property type="protein sequence ID" value="AEN86178.1"/>
    <property type="molecule type" value="Genomic_DNA"/>
</dbReference>
<dbReference type="EMBL" id="JF276297">
    <property type="protein sequence ID" value="AEN86179.1"/>
    <property type="molecule type" value="Genomic_DNA"/>
</dbReference>
<dbReference type="RefSeq" id="XP_006694660.1">
    <property type="nucleotide sequence ID" value="XM_006694597.1"/>
</dbReference>
<dbReference type="PDB" id="5CWW">
    <property type="method" value="X-ray"/>
    <property type="resolution" value="2.20 A"/>
    <property type="chains" value="A=858-993"/>
</dbReference>
<dbReference type="PDB" id="5HB0">
    <property type="method" value="X-ray"/>
    <property type="resolution" value="3.50 A"/>
    <property type="chains" value="E/F/G/H=729-750"/>
</dbReference>
<dbReference type="PDB" id="5HB5">
    <property type="method" value="X-ray"/>
    <property type="resolution" value="1.50 A"/>
    <property type="chains" value="A/B=858-993"/>
</dbReference>
<dbReference type="PDB" id="5HB6">
    <property type="method" value="X-ray"/>
    <property type="resolution" value="1.30 A"/>
    <property type="chains" value="A/B=858-1000"/>
</dbReference>
<dbReference type="PDB" id="7MVV">
    <property type="method" value="EM"/>
    <property type="resolution" value="3.22 A"/>
    <property type="chains" value="C=616-683"/>
</dbReference>
<dbReference type="PDB" id="7MVZ">
    <property type="method" value="EM"/>
    <property type="resolution" value="2.81 A"/>
    <property type="chains" value="C=640-732"/>
</dbReference>
<dbReference type="PDBsum" id="5CWW"/>
<dbReference type="PDBsum" id="5HB0"/>
<dbReference type="PDBsum" id="5HB5"/>
<dbReference type="PDBsum" id="5HB6"/>
<dbReference type="PDBsum" id="7MVV"/>
<dbReference type="PDBsum" id="7MVZ"/>
<dbReference type="EMDB" id="EMD-24057"/>
<dbReference type="EMDB" id="EMD-24059"/>
<dbReference type="SMR" id="G0SAK3"/>
<dbReference type="DIP" id="DIP-60574N"/>
<dbReference type="DIP" id="DIP-61561N"/>
<dbReference type="IntAct" id="G0SAK3">
    <property type="interactions" value="13"/>
</dbReference>
<dbReference type="STRING" id="759272.G0SAK3"/>
<dbReference type="MEROPS" id="S59.A07"/>
<dbReference type="TCDB" id="1.I.1.1.2">
    <property type="family name" value="the nuclear pore complex (npc) family"/>
</dbReference>
<dbReference type="GeneID" id="18258297"/>
<dbReference type="KEGG" id="cthr:CTHT_0042590"/>
<dbReference type="eggNOG" id="KOG0845">
    <property type="taxonomic scope" value="Eukaryota"/>
</dbReference>
<dbReference type="HOGENOM" id="CLU_002330_0_0_1"/>
<dbReference type="OMA" id="PMGKGLN"/>
<dbReference type="OrthoDB" id="3797628at2759"/>
<dbReference type="EvolutionaryTrace" id="G0SAK3"/>
<dbReference type="Proteomes" id="UP000008066">
    <property type="component" value="Unassembled WGS sequence"/>
</dbReference>
<dbReference type="GO" id="GO:0031965">
    <property type="term" value="C:nuclear membrane"/>
    <property type="evidence" value="ECO:0007669"/>
    <property type="project" value="UniProtKB-SubCell"/>
</dbReference>
<dbReference type="GO" id="GO:0044614">
    <property type="term" value="C:nuclear pore cytoplasmic filaments"/>
    <property type="evidence" value="ECO:0007669"/>
    <property type="project" value="TreeGrafter"/>
</dbReference>
<dbReference type="GO" id="GO:0016787">
    <property type="term" value="F:hydrolase activity"/>
    <property type="evidence" value="ECO:0007669"/>
    <property type="project" value="UniProtKB-KW"/>
</dbReference>
<dbReference type="GO" id="GO:0008139">
    <property type="term" value="F:nuclear localization sequence binding"/>
    <property type="evidence" value="ECO:0007669"/>
    <property type="project" value="TreeGrafter"/>
</dbReference>
<dbReference type="GO" id="GO:0003723">
    <property type="term" value="F:RNA binding"/>
    <property type="evidence" value="ECO:0007669"/>
    <property type="project" value="UniProtKB-KW"/>
</dbReference>
<dbReference type="GO" id="GO:0017056">
    <property type="term" value="F:structural constituent of nuclear pore"/>
    <property type="evidence" value="ECO:0007669"/>
    <property type="project" value="InterPro"/>
</dbReference>
<dbReference type="GO" id="GO:0051028">
    <property type="term" value="P:mRNA transport"/>
    <property type="evidence" value="ECO:0007669"/>
    <property type="project" value="UniProtKB-KW"/>
</dbReference>
<dbReference type="GO" id="GO:0000973">
    <property type="term" value="P:post-transcriptional tethering of RNA polymerase II gene DNA at nuclear periphery"/>
    <property type="evidence" value="ECO:0007669"/>
    <property type="project" value="TreeGrafter"/>
</dbReference>
<dbReference type="GO" id="GO:0006606">
    <property type="term" value="P:protein import into nucleus"/>
    <property type="evidence" value="ECO:0007669"/>
    <property type="project" value="TreeGrafter"/>
</dbReference>
<dbReference type="GO" id="GO:0006405">
    <property type="term" value="P:RNA export from nucleus"/>
    <property type="evidence" value="ECO:0007669"/>
    <property type="project" value="TreeGrafter"/>
</dbReference>
<dbReference type="GO" id="GO:0034398">
    <property type="term" value="P:telomere tethering at nuclear periphery"/>
    <property type="evidence" value="ECO:0007669"/>
    <property type="project" value="TreeGrafter"/>
</dbReference>
<dbReference type="FunFam" id="1.10.10.2360:FF:000001">
    <property type="entry name" value="Nuclear pore complex protein Nup98-Nup96"/>
    <property type="match status" value="1"/>
</dbReference>
<dbReference type="FunFam" id="3.30.1610.10:FF:000003">
    <property type="entry name" value="Nucleoporin SONB, putative"/>
    <property type="match status" value="1"/>
</dbReference>
<dbReference type="Gene3D" id="1.10.10.2360">
    <property type="match status" value="1"/>
</dbReference>
<dbReference type="Gene3D" id="1.25.40.690">
    <property type="match status" value="1"/>
</dbReference>
<dbReference type="Gene3D" id="3.30.1610.10">
    <property type="entry name" value="Peptidase S59, nucleoporin"/>
    <property type="match status" value="1"/>
</dbReference>
<dbReference type="InterPro" id="IPR025574">
    <property type="entry name" value="Nucleoporin_FG_rpt"/>
</dbReference>
<dbReference type="InterPro" id="IPR037665">
    <property type="entry name" value="Nucleoporin_S59-like"/>
</dbReference>
<dbReference type="InterPro" id="IPR007230">
    <property type="entry name" value="Nup98_auto-Pept-S59_dom"/>
</dbReference>
<dbReference type="InterPro" id="IPR036903">
    <property type="entry name" value="Nup98_auto-Pept-S59_dom_sf"/>
</dbReference>
<dbReference type="InterPro" id="IPR021967">
    <property type="entry name" value="Nup98_C"/>
</dbReference>
<dbReference type="PANTHER" id="PTHR23198:SF6">
    <property type="entry name" value="NUCLEAR PORE COMPLEX PROTEIN NUP98-NUP96"/>
    <property type="match status" value="1"/>
</dbReference>
<dbReference type="PANTHER" id="PTHR23198">
    <property type="entry name" value="NUCLEOPORIN"/>
    <property type="match status" value="1"/>
</dbReference>
<dbReference type="Pfam" id="PF04096">
    <property type="entry name" value="Nucleoporin2"/>
    <property type="match status" value="1"/>
</dbReference>
<dbReference type="Pfam" id="PF13634">
    <property type="entry name" value="Nucleoporin_FG"/>
    <property type="match status" value="2"/>
</dbReference>
<dbReference type="Pfam" id="PF12110">
    <property type="entry name" value="Nup96"/>
    <property type="match status" value="1"/>
</dbReference>
<dbReference type="SUPFAM" id="SSF82215">
    <property type="entry name" value="C-terminal autoproteolytic domain of nucleoporin nup98"/>
    <property type="match status" value="1"/>
</dbReference>
<dbReference type="PROSITE" id="PS51434">
    <property type="entry name" value="NUP_C"/>
    <property type="match status" value="1"/>
</dbReference>
<name>NU145_CHATD</name>
<feature type="chain" id="PRO_0000433184" description="Nucleoporin NUP145N" evidence="6">
    <location>
        <begin position="1"/>
        <end position="993"/>
    </location>
</feature>
<feature type="chain" id="PRO_0000433185" description="Nucleoporin NUP145C" evidence="6">
    <location>
        <begin position="994"/>
        <end position="1793"/>
    </location>
</feature>
<feature type="repeat" description="GLFG 1">
    <location>
        <begin position="50"/>
        <end position="53"/>
    </location>
</feature>
<feature type="repeat" description="GLFG 2">
    <location>
        <begin position="143"/>
        <end position="146"/>
    </location>
</feature>
<feature type="repeat" description="GLFG 3">
    <location>
        <begin position="255"/>
        <end position="258"/>
    </location>
</feature>
<feature type="repeat" description="GLFG 4">
    <location>
        <begin position="282"/>
        <end position="285"/>
    </location>
</feature>
<feature type="repeat" description="GLFG 5">
    <location>
        <begin position="292"/>
        <end position="295"/>
    </location>
</feature>
<feature type="repeat" description="GLFG 6">
    <location>
        <begin position="306"/>
        <end position="309"/>
    </location>
</feature>
<feature type="repeat" description="GLFG 7">
    <location>
        <begin position="336"/>
        <end position="339"/>
    </location>
</feature>
<feature type="repeat" description="GLFG 8">
    <location>
        <begin position="381"/>
        <end position="384"/>
    </location>
</feature>
<feature type="repeat" description="GLFG 9">
    <location>
        <begin position="395"/>
        <end position="398"/>
    </location>
</feature>
<feature type="repeat" description="GLFG 10">
    <location>
        <begin position="434"/>
        <end position="437"/>
    </location>
</feature>
<feature type="repeat" description="GLFG 11">
    <location>
        <begin position="446"/>
        <end position="449"/>
    </location>
</feature>
<feature type="repeat" description="GLFG 12">
    <location>
        <begin position="470"/>
        <end position="473"/>
    </location>
</feature>
<feature type="repeat" description="GLFG 13">
    <location>
        <begin position="481"/>
        <end position="484"/>
    </location>
</feature>
<feature type="repeat" description="GLFG 14">
    <location>
        <begin position="496"/>
        <end position="499"/>
    </location>
</feature>
<feature type="repeat" description="GLFG 15">
    <location>
        <begin position="514"/>
        <end position="517"/>
    </location>
</feature>
<feature type="repeat" description="GLFG 16">
    <location>
        <begin position="539"/>
        <end position="542"/>
    </location>
</feature>
<feature type="domain" description="Peptidase S59" evidence="2">
    <location>
        <begin position="857"/>
        <end position="993"/>
    </location>
</feature>
<feature type="region of interest" description="Disordered" evidence="3">
    <location>
        <begin position="404"/>
        <end position="583"/>
    </location>
</feature>
<feature type="region of interest" description="Disordered" evidence="3">
    <location>
        <begin position="740"/>
        <end position="859"/>
    </location>
</feature>
<feature type="region of interest" description="Nucleoporin RNA-binding motif (NRM)" evidence="1">
    <location>
        <begin position="859"/>
        <end position="992"/>
    </location>
</feature>
<feature type="region of interest" description="Disordered" evidence="3">
    <location>
        <begin position="999"/>
        <end position="1043"/>
    </location>
</feature>
<feature type="region of interest" description="Disordered" evidence="3">
    <location>
        <begin position="1066"/>
        <end position="1097"/>
    </location>
</feature>
<feature type="compositionally biased region" description="Polar residues" evidence="3">
    <location>
        <begin position="417"/>
        <end position="431"/>
    </location>
</feature>
<feature type="compositionally biased region" description="Low complexity" evidence="3">
    <location>
        <begin position="437"/>
        <end position="459"/>
    </location>
</feature>
<feature type="compositionally biased region" description="Gly residues" evidence="3">
    <location>
        <begin position="467"/>
        <end position="483"/>
    </location>
</feature>
<feature type="compositionally biased region" description="Polar residues" evidence="3">
    <location>
        <begin position="500"/>
        <end position="511"/>
    </location>
</feature>
<feature type="compositionally biased region" description="Low complexity" evidence="3">
    <location>
        <begin position="518"/>
        <end position="535"/>
    </location>
</feature>
<feature type="compositionally biased region" description="Polar residues" evidence="3">
    <location>
        <begin position="546"/>
        <end position="575"/>
    </location>
</feature>
<feature type="compositionally biased region" description="Polar residues" evidence="3">
    <location>
        <begin position="801"/>
        <end position="813"/>
    </location>
</feature>
<feature type="compositionally biased region" description="Low complexity" evidence="3">
    <location>
        <begin position="814"/>
        <end position="823"/>
    </location>
</feature>
<feature type="compositionally biased region" description="Basic and acidic residues" evidence="3">
    <location>
        <begin position="826"/>
        <end position="840"/>
    </location>
</feature>
<feature type="compositionally biased region" description="Acidic residues" evidence="3">
    <location>
        <begin position="999"/>
        <end position="1013"/>
    </location>
</feature>
<feature type="compositionally biased region" description="Low complexity" evidence="3">
    <location>
        <begin position="1025"/>
        <end position="1037"/>
    </location>
</feature>
<feature type="strand" evidence="7">
    <location>
        <begin position="860"/>
        <end position="864"/>
    </location>
</feature>
<feature type="helix" evidence="7">
    <location>
        <begin position="866"/>
        <end position="870"/>
    </location>
</feature>
<feature type="helix" evidence="7">
    <location>
        <begin position="874"/>
        <end position="877"/>
    </location>
</feature>
<feature type="strand" evidence="7">
    <location>
        <begin position="879"/>
        <end position="882"/>
    </location>
</feature>
<feature type="strand" evidence="7">
    <location>
        <begin position="884"/>
        <end position="887"/>
    </location>
</feature>
<feature type="turn" evidence="7">
    <location>
        <begin position="888"/>
        <end position="890"/>
    </location>
</feature>
<feature type="strand" evidence="7">
    <location>
        <begin position="891"/>
        <end position="897"/>
    </location>
</feature>
<feature type="helix" evidence="7">
    <location>
        <begin position="906"/>
        <end position="908"/>
    </location>
</feature>
<feature type="turn" evidence="7">
    <location>
        <begin position="910"/>
        <end position="912"/>
    </location>
</feature>
<feature type="strand" evidence="7">
    <location>
        <begin position="913"/>
        <end position="917"/>
    </location>
</feature>
<feature type="strand" evidence="7">
    <location>
        <begin position="920"/>
        <end position="923"/>
    </location>
</feature>
<feature type="helix" evidence="7">
    <location>
        <begin position="927"/>
        <end position="929"/>
    </location>
</feature>
<feature type="strand" evidence="7">
    <location>
        <begin position="941"/>
        <end position="946"/>
    </location>
</feature>
<feature type="helix" evidence="7">
    <location>
        <begin position="958"/>
        <end position="969"/>
    </location>
</feature>
<feature type="strand" evidence="7">
    <location>
        <begin position="975"/>
        <end position="980"/>
    </location>
</feature>
<feature type="turn" evidence="7">
    <location>
        <begin position="981"/>
        <end position="984"/>
    </location>
</feature>
<feature type="strand" evidence="7">
    <location>
        <begin position="985"/>
        <end position="991"/>
    </location>
</feature>
<reference key="1">
    <citation type="journal article" date="2011" name="Cell">
        <title>Insight into structure and assembly of the nuclear pore complex by utilizing the genome of a eukaryotic thermophile.</title>
        <authorList>
            <person name="Amlacher S."/>
            <person name="Sarges P."/>
            <person name="Flemming D."/>
            <person name="van Noort V."/>
            <person name="Kunze R."/>
            <person name="Devos D.P."/>
            <person name="Arumugam M."/>
            <person name="Bork P."/>
            <person name="Hurt E."/>
        </authorList>
    </citation>
    <scope>NUCLEOTIDE SEQUENCE [LARGE SCALE GENOMIC DNA]</scope>
    <source>
        <strain>DSM 1495 / CBS 144.50 / IMI 039719</strain>
    </source>
</reference>
<keyword id="KW-0002">3D-structure</keyword>
<keyword id="KW-0068">Autocatalytic cleavage</keyword>
<keyword id="KW-0378">Hydrolase</keyword>
<keyword id="KW-0472">Membrane</keyword>
<keyword id="KW-0509">mRNA transport</keyword>
<keyword id="KW-0906">Nuclear pore complex</keyword>
<keyword id="KW-0539">Nucleus</keyword>
<keyword id="KW-0653">Protein transport</keyword>
<keyword id="KW-1185">Reference proteome</keyword>
<keyword id="KW-0677">Repeat</keyword>
<keyword id="KW-0694">RNA-binding</keyword>
<keyword id="KW-0811">Translocation</keyword>
<keyword id="KW-0813">Transport</keyword>
<accession>G0SAK3</accession>
<accession>G3EQ75</accession>
<accession>G3EQ76</accession>
<sequence length="1793" mass="188540">MSFGFGSGGFGQNNNSSTFGGFGSTPTTNTGFGSTGTTAFGSTSNTTGGGLFGGGGGGFGSGNTFGSGFGSKPAFGTPATTSSTSLFGSTTTTAGGTGFGSGGFGSTNTSSPFGGGGTSLFGNKTTTGFGSGTSTFGSNTGGGLFGGGSTTTGFGATNNPGIGTNVGDPPGTAVVPFSPTVEKEVNNPSQSNSYQNILFMDAYKKWSAEELRLADYNQGRKTAAPGGTGAFGSSGFGGFGTTSNTGGFGSNTGGGLFGNTQQNTGGFGTTNTTGSAFGSGGGLFGNKPATGGLFGTSSSQPAQSGGLFGSGTASTFGSSNTGTTSTFGSNNNTGGGLFGSNNTSSKPAFSFGTSNTSTPGFGTATTGSGFGTGTTTNTGGGLFGNTAQNTNTGGGLFGNQQQSGSAFGSGTGFGQQNQSTGTSLFGNTQQKPGGLFGSTTTNTSGGLFGSTNTGTSTFGQTPATQNTGGGLFGSKPAGTGGLFGSTATNQPASTGGLFGNLNTNAQTQQPATGGLFGNLGQNNQAKPSLFGTSTTTGGGLFGNTNAQQQTGSLFGTSTAQQQPQTGLGASLFGSSQQQQQQPQTFSTSITDISAYGATTLFSGLPDDKIQNPGPLATPLSGKAKVKSRSILPMYKLSPANASRLVTTPQKRAYGFSFSAYGSPTSPSSSASSTPGAFGQSILSSSINRGLNKSISASNLRRSLNVEDSILQPGAFSANSSMRLLGGPGSHKKLVINKDMRTDLFSPPNKDKQPQEDGTAARKTVTKRVSFDTSNVETPEKTIESSIPATDDSGYLKPDARSTANGTNGANGAKSSPVAAASPPEMEQVKGKELAVVHEEESPAPAQTDKPRGSQIEPGAYWMSPTADDIRAMNRMQRQRVVGFTVGRENVGSVQFKVPVDLSNINLDDLFGTIVILEPRSATVYPNAAKKPPMGKGLNVPALISLEHSWPRGGPTIKGRRLERHIERLKSIPDTTFESYDPETGVWAFSVEHFTTYGLGDDDDYDDDDYETEPESAVKSTPRPVTSPSISKSSTSPIDPDDTFEFRRSRRALPGAFDDAALSDTDEVANHAQRQGTLSPEPQDADTPLPSREWPEDESMADGLDEYQLEAYEEASQQGSVDEQEDFLPSRFAADNDAPQVPAGIMRARMRAVKKLNAPTKIEVAGGDDWTQILQASVKAPRTMDRATLRALNESGAVWEMKDRGSPPPQATATVSDGMGFATSIDLMKSLFEQAKAPTQPALTTSGKGFVKWPYEQRSKTDTEENLAVPRTNWGPNELLISTQHNEPNLLPVDAADDSATSPSTLARLQQYINLVSSKKQLQRVAGPEFRELAQGDSVWELAALLFDDNGEGVSQFWQQLVSEATDRALSFTAGLEEKAIICLAGNRVDEACRHLLAAGNFRLATLVSTIGKVDNKDIRAQLKDWRESNVLAEFSEPIRAIYELLAGNASVCAGVKNVPIENRVNSFTISQRFGLDWMRSFGLRLWYTSGVIPDVAAAVRSFQEDIEQDREPEPDSALWTLLKAFASREYDWSDTRLGWLLTKAIYTTGKVSFGEDALQKLDKASVTFASALTAASHWVPATFVLLQLSDPASREAAVRDHLGRHAHRIGSPRNLMSPFFTLQKFGVPEAWIWEAKALDYRSRQDSQQEFLALIWAQNYAEANRTFVTRVGPDLVIERNLPRLFAFAQLLFKVKKHLPNWERSAAVYLLYPMAVMQNQGSGKLDRFDNQLIDGLVALHSQTHGDIRQEAAIADMAEELIKCKGAAAASDPRLLQLLPQDVRGKYLRAQVLEAF</sequence>
<organism>
    <name type="scientific">Chaetomium thermophilum (strain DSM 1495 / CBS 144.50 / IMI 039719)</name>
    <name type="common">Thermochaetoides thermophila</name>
    <dbReference type="NCBI Taxonomy" id="759272"/>
    <lineage>
        <taxon>Eukaryota</taxon>
        <taxon>Fungi</taxon>
        <taxon>Dikarya</taxon>
        <taxon>Ascomycota</taxon>
        <taxon>Pezizomycotina</taxon>
        <taxon>Sordariomycetes</taxon>
        <taxon>Sordariomycetidae</taxon>
        <taxon>Sordariales</taxon>
        <taxon>Chaetomiaceae</taxon>
        <taxon>Thermochaetoides</taxon>
    </lineage>
</organism>